<proteinExistence type="inferred from homology"/>
<feature type="chain" id="PRO_1000058716" description="CinA-like protein">
    <location>
        <begin position="1"/>
        <end position="430"/>
    </location>
</feature>
<evidence type="ECO:0000255" key="1">
    <source>
        <dbReference type="HAMAP-Rule" id="MF_00226"/>
    </source>
</evidence>
<organism>
    <name type="scientific">Mycobacterium tuberculosis (strain ATCC 25177 / H37Ra)</name>
    <dbReference type="NCBI Taxonomy" id="419947"/>
    <lineage>
        <taxon>Bacteria</taxon>
        <taxon>Bacillati</taxon>
        <taxon>Actinomycetota</taxon>
        <taxon>Actinomycetes</taxon>
        <taxon>Mycobacteriales</taxon>
        <taxon>Mycobacteriaceae</taxon>
        <taxon>Mycobacterium</taxon>
        <taxon>Mycobacterium tuberculosis complex</taxon>
    </lineage>
</organism>
<reference key="1">
    <citation type="journal article" date="2008" name="PLoS ONE">
        <title>Genetic basis of virulence attenuation revealed by comparative genomic analysis of Mycobacterium tuberculosis strain H37Ra versus H37Rv.</title>
        <authorList>
            <person name="Zheng H."/>
            <person name="Lu L."/>
            <person name="Wang B."/>
            <person name="Pu S."/>
            <person name="Zhang X."/>
            <person name="Zhu G."/>
            <person name="Shi W."/>
            <person name="Zhang L."/>
            <person name="Wang H."/>
            <person name="Wang S."/>
            <person name="Zhao G."/>
            <person name="Zhang Y."/>
        </authorList>
    </citation>
    <scope>NUCLEOTIDE SEQUENCE [LARGE SCALE GENOMIC DNA]</scope>
    <source>
        <strain>ATCC 25177 / H37Ra</strain>
    </source>
</reference>
<name>CINAL_MYCTA</name>
<protein>
    <recommendedName>
        <fullName evidence="1">CinA-like protein</fullName>
    </recommendedName>
</protein>
<accession>A5U3S0</accession>
<keyword id="KW-1185">Reference proteome</keyword>
<dbReference type="EMBL" id="CP000611">
    <property type="protein sequence ID" value="ABQ73670.1"/>
    <property type="molecule type" value="Genomic_DNA"/>
</dbReference>
<dbReference type="RefSeq" id="WP_003900426.1">
    <property type="nucleotide sequence ID" value="NZ_CP016972.1"/>
</dbReference>
<dbReference type="SMR" id="A5U3S0"/>
<dbReference type="KEGG" id="mra:MRA_1912"/>
<dbReference type="eggNOG" id="COG1058">
    <property type="taxonomic scope" value="Bacteria"/>
</dbReference>
<dbReference type="eggNOG" id="COG1546">
    <property type="taxonomic scope" value="Bacteria"/>
</dbReference>
<dbReference type="HOGENOM" id="CLU_030805_9_2_11"/>
<dbReference type="Proteomes" id="UP000001988">
    <property type="component" value="Chromosome"/>
</dbReference>
<dbReference type="CDD" id="cd00885">
    <property type="entry name" value="cinA"/>
    <property type="match status" value="1"/>
</dbReference>
<dbReference type="FunFam" id="3.40.980.10:FF:000018">
    <property type="entry name" value="CinA-like protein"/>
    <property type="match status" value="1"/>
</dbReference>
<dbReference type="Gene3D" id="3.90.950.20">
    <property type="entry name" value="CinA-like"/>
    <property type="match status" value="1"/>
</dbReference>
<dbReference type="Gene3D" id="3.40.980.10">
    <property type="entry name" value="MoaB/Mog-like domain"/>
    <property type="match status" value="1"/>
</dbReference>
<dbReference type="HAMAP" id="MF_00226_B">
    <property type="entry name" value="CinA_B"/>
    <property type="match status" value="1"/>
</dbReference>
<dbReference type="InterPro" id="IPR050101">
    <property type="entry name" value="CinA"/>
</dbReference>
<dbReference type="InterPro" id="IPR036653">
    <property type="entry name" value="CinA-like_C"/>
</dbReference>
<dbReference type="InterPro" id="IPR008136">
    <property type="entry name" value="CinA_C"/>
</dbReference>
<dbReference type="InterPro" id="IPR008135">
    <property type="entry name" value="Competence-induced_CinA"/>
</dbReference>
<dbReference type="InterPro" id="IPR036425">
    <property type="entry name" value="MoaB/Mog-like_dom_sf"/>
</dbReference>
<dbReference type="InterPro" id="IPR001453">
    <property type="entry name" value="MoaB/Mog_dom"/>
</dbReference>
<dbReference type="NCBIfam" id="TIGR00200">
    <property type="entry name" value="cinA_nterm"/>
    <property type="match status" value="1"/>
</dbReference>
<dbReference type="NCBIfam" id="TIGR00199">
    <property type="entry name" value="PncC_domain"/>
    <property type="match status" value="1"/>
</dbReference>
<dbReference type="NCBIfam" id="NF001813">
    <property type="entry name" value="PRK00549.1"/>
    <property type="match status" value="1"/>
</dbReference>
<dbReference type="PANTHER" id="PTHR13939">
    <property type="entry name" value="NICOTINAMIDE-NUCLEOTIDE AMIDOHYDROLASE PNCC"/>
    <property type="match status" value="1"/>
</dbReference>
<dbReference type="PANTHER" id="PTHR13939:SF0">
    <property type="entry name" value="NMN AMIDOHYDROLASE-LIKE PROTEIN YFAY"/>
    <property type="match status" value="1"/>
</dbReference>
<dbReference type="Pfam" id="PF02464">
    <property type="entry name" value="CinA"/>
    <property type="match status" value="1"/>
</dbReference>
<dbReference type="Pfam" id="PF00994">
    <property type="entry name" value="MoCF_biosynth"/>
    <property type="match status" value="1"/>
</dbReference>
<dbReference type="PIRSF" id="PIRSF006728">
    <property type="entry name" value="CinA"/>
    <property type="match status" value="1"/>
</dbReference>
<dbReference type="SMART" id="SM00852">
    <property type="entry name" value="MoCF_biosynth"/>
    <property type="match status" value="1"/>
</dbReference>
<dbReference type="SUPFAM" id="SSF142433">
    <property type="entry name" value="CinA-like"/>
    <property type="match status" value="1"/>
</dbReference>
<dbReference type="SUPFAM" id="SSF53218">
    <property type="entry name" value="Molybdenum cofactor biosynthesis proteins"/>
    <property type="match status" value="1"/>
</dbReference>
<sequence length="430" mass="45512">MAVSARAGIVITGTEVLTGRVQDRNGPWIADRLLELGVELAHITICGDRPADIEAQLRFMAEQGVDLIVTSGGLGPTADDMTVEVVARYCGRELVLDDELENRIANILKKLMGRNPAIEPANFDSIRAANRKQAMIPAGSQVIDPVGTAPGLVVPGRPAVMVLPGPPRELQPIWSKAIQTAPVQDAIAGRTTYRQETIRIFGLPESSLADTLRDAEAAIPGFDLVEITTCLRRGEIEMVTRFEPNAAQVYTQLARLLRDRHGHQVYSEDGASVDELVAKLLTGRRIATAESCTAGLLAARLTDRPGSSKYVAGAVVAYSNEAKAQLLGVDPALIEAHGAVSEPVAQAMAAGALQGFGADTATAITGIAGPSGGTPEKPVGTVCFTVLLDDGRTTTRTVRLPGNRSDIRERSTTVAMHLLRRTLSGIPGSP</sequence>
<comment type="similarity">
    <text evidence="1">Belongs to the CinA family.</text>
</comment>
<gene>
    <name type="ordered locus">MRA_1912</name>
</gene>